<accession>B7MIE5</accession>
<dbReference type="EMBL" id="CU928161">
    <property type="protein sequence ID" value="CAR02345.1"/>
    <property type="molecule type" value="Genomic_DNA"/>
</dbReference>
<dbReference type="RefSeq" id="WP_000024569.1">
    <property type="nucleotide sequence ID" value="NC_011742.1"/>
</dbReference>
<dbReference type="SMR" id="B7MIE5"/>
<dbReference type="KEGG" id="ecz:ECS88_1014"/>
<dbReference type="HOGENOM" id="CLU_144710_3_1_6"/>
<dbReference type="Proteomes" id="UP000000747">
    <property type="component" value="Chromosome"/>
</dbReference>
<dbReference type="FunFam" id="1.10.1660.10:FF:000006">
    <property type="entry name" value="Chaperone modulatory protein CbpM"/>
    <property type="match status" value="1"/>
</dbReference>
<dbReference type="Gene3D" id="1.10.1660.10">
    <property type="match status" value="1"/>
</dbReference>
<dbReference type="HAMAP" id="MF_01155">
    <property type="entry name" value="CbpM"/>
    <property type="match status" value="1"/>
</dbReference>
<dbReference type="InterPro" id="IPR022835">
    <property type="entry name" value="CbpM"/>
</dbReference>
<dbReference type="NCBIfam" id="NF007617">
    <property type="entry name" value="PRK10265.1"/>
    <property type="match status" value="1"/>
</dbReference>
<dbReference type="Pfam" id="PF13591">
    <property type="entry name" value="MerR_2"/>
    <property type="match status" value="1"/>
</dbReference>
<protein>
    <recommendedName>
        <fullName evidence="1">Chaperone modulatory protein CbpM</fullName>
    </recommendedName>
</protein>
<name>CBPM_ECO45</name>
<sequence>MANVTVTFTITEFCLHTGISEEELNEIVGLGVVEPSEIQETTWVFDDHAAIVVQRAVRLRHELALDWPGIAVALTLMDDIAHLKQENRLLRQRLSRFVAHP</sequence>
<evidence type="ECO:0000255" key="1">
    <source>
        <dbReference type="HAMAP-Rule" id="MF_01155"/>
    </source>
</evidence>
<feature type="chain" id="PRO_1000137766" description="Chaperone modulatory protein CbpM">
    <location>
        <begin position="1"/>
        <end position="101"/>
    </location>
</feature>
<keyword id="KW-1185">Reference proteome</keyword>
<organism>
    <name type="scientific">Escherichia coli O45:K1 (strain S88 / ExPEC)</name>
    <dbReference type="NCBI Taxonomy" id="585035"/>
    <lineage>
        <taxon>Bacteria</taxon>
        <taxon>Pseudomonadati</taxon>
        <taxon>Pseudomonadota</taxon>
        <taxon>Gammaproteobacteria</taxon>
        <taxon>Enterobacterales</taxon>
        <taxon>Enterobacteriaceae</taxon>
        <taxon>Escherichia</taxon>
    </lineage>
</organism>
<reference key="1">
    <citation type="journal article" date="2009" name="PLoS Genet.">
        <title>Organised genome dynamics in the Escherichia coli species results in highly diverse adaptive paths.</title>
        <authorList>
            <person name="Touchon M."/>
            <person name="Hoede C."/>
            <person name="Tenaillon O."/>
            <person name="Barbe V."/>
            <person name="Baeriswyl S."/>
            <person name="Bidet P."/>
            <person name="Bingen E."/>
            <person name="Bonacorsi S."/>
            <person name="Bouchier C."/>
            <person name="Bouvet O."/>
            <person name="Calteau A."/>
            <person name="Chiapello H."/>
            <person name="Clermont O."/>
            <person name="Cruveiller S."/>
            <person name="Danchin A."/>
            <person name="Diard M."/>
            <person name="Dossat C."/>
            <person name="Karoui M.E."/>
            <person name="Frapy E."/>
            <person name="Garry L."/>
            <person name="Ghigo J.M."/>
            <person name="Gilles A.M."/>
            <person name="Johnson J."/>
            <person name="Le Bouguenec C."/>
            <person name="Lescat M."/>
            <person name="Mangenot S."/>
            <person name="Martinez-Jehanne V."/>
            <person name="Matic I."/>
            <person name="Nassif X."/>
            <person name="Oztas S."/>
            <person name="Petit M.A."/>
            <person name="Pichon C."/>
            <person name="Rouy Z."/>
            <person name="Ruf C.S."/>
            <person name="Schneider D."/>
            <person name="Tourret J."/>
            <person name="Vacherie B."/>
            <person name="Vallenet D."/>
            <person name="Medigue C."/>
            <person name="Rocha E.P.C."/>
            <person name="Denamur E."/>
        </authorList>
    </citation>
    <scope>NUCLEOTIDE SEQUENCE [LARGE SCALE GENOMIC DNA]</scope>
    <source>
        <strain>S88 / ExPEC</strain>
    </source>
</reference>
<gene>
    <name evidence="1" type="primary">cbpM</name>
    <name type="ordered locus">ECS88_1014</name>
</gene>
<proteinExistence type="inferred from homology"/>
<comment type="function">
    <text evidence="1">Interacts with CbpA and inhibits both the DnaJ-like co-chaperone activity and the DNA binding activity of CbpA. Together with CbpA, modulates the activity of the DnaK chaperone system. Does not inhibit the co-chaperone activity of DnaJ.</text>
</comment>
<comment type="similarity">
    <text evidence="1">Belongs to the CbpM family.</text>
</comment>